<dbReference type="EC" id="6.3.2.14" evidence="8 13"/>
<dbReference type="EC" id="6.2.1.72" evidence="13 17 18 19 20"/>
<dbReference type="EMBL" id="M60177">
    <property type="protein sequence ID" value="AAA92015.1"/>
    <property type="molecule type" value="Genomic_DNA"/>
</dbReference>
<dbReference type="EMBL" id="U82598">
    <property type="protein sequence ID" value="AAB40785.1"/>
    <property type="status" value="ALT_INIT"/>
    <property type="molecule type" value="Genomic_DNA"/>
</dbReference>
<dbReference type="EMBL" id="U00096">
    <property type="protein sequence ID" value="AAC73687.1"/>
    <property type="molecule type" value="Genomic_DNA"/>
</dbReference>
<dbReference type="EMBL" id="AP009048">
    <property type="protein sequence ID" value="BAE76341.1"/>
    <property type="molecule type" value="Genomic_DNA"/>
</dbReference>
<dbReference type="EMBL" id="M17354">
    <property type="protein sequence ID" value="AAA23727.1"/>
    <property type="molecule type" value="Genomic_DNA"/>
</dbReference>
<dbReference type="EMBL" id="J04216">
    <property type="protein sequence ID" value="AAA23759.1"/>
    <property type="molecule type" value="Genomic_DNA"/>
</dbReference>
<dbReference type="PIR" id="H64791">
    <property type="entry name" value="YGECEF"/>
</dbReference>
<dbReference type="RefSeq" id="NP_415118.1">
    <property type="nucleotide sequence ID" value="NC_000913.3"/>
</dbReference>
<dbReference type="RefSeq" id="WP_000077805.1">
    <property type="nucleotide sequence ID" value="NZ_SSZK01000032.1"/>
</dbReference>
<dbReference type="PDB" id="2ROQ">
    <property type="method" value="NMR"/>
    <property type="chains" value="A=960-1293"/>
</dbReference>
<dbReference type="PDB" id="3TEJ">
    <property type="method" value="X-ray"/>
    <property type="resolution" value="1.90 A"/>
    <property type="chains" value="A/B=965-1293"/>
</dbReference>
<dbReference type="PDB" id="5JA1">
    <property type="method" value="X-ray"/>
    <property type="resolution" value="3.00 A"/>
    <property type="chains" value="A=1-1293"/>
</dbReference>
<dbReference type="PDB" id="5JA2">
    <property type="method" value="X-ray"/>
    <property type="resolution" value="3.00 A"/>
    <property type="chains" value="A=1-1293"/>
</dbReference>
<dbReference type="PDB" id="5T3D">
    <property type="method" value="X-ray"/>
    <property type="resolution" value="2.80 A"/>
    <property type="chains" value="A=1-1293"/>
</dbReference>
<dbReference type="PDBsum" id="2ROQ"/>
<dbReference type="PDBsum" id="3TEJ"/>
<dbReference type="PDBsum" id="5JA1"/>
<dbReference type="PDBsum" id="5JA2"/>
<dbReference type="PDBsum" id="5T3D"/>
<dbReference type="SMR" id="P11454"/>
<dbReference type="BioGRID" id="4259895">
    <property type="interactions" value="309"/>
</dbReference>
<dbReference type="BioGRID" id="849570">
    <property type="interactions" value="2"/>
</dbReference>
<dbReference type="DIP" id="DIP-9516N"/>
<dbReference type="FunCoup" id="P11454">
    <property type="interactions" value="114"/>
</dbReference>
<dbReference type="IntAct" id="P11454">
    <property type="interactions" value="10"/>
</dbReference>
<dbReference type="STRING" id="511145.b0586"/>
<dbReference type="ESTHER" id="ecoli-entf">
    <property type="family name" value="Thioesterase"/>
</dbReference>
<dbReference type="jPOST" id="P11454"/>
<dbReference type="PaxDb" id="511145-b0586"/>
<dbReference type="EnsemblBacteria" id="AAC73687">
    <property type="protein sequence ID" value="AAC73687"/>
    <property type="gene ID" value="b0586"/>
</dbReference>
<dbReference type="GeneID" id="945184"/>
<dbReference type="KEGG" id="ecj:JW0578"/>
<dbReference type="KEGG" id="eco:b0586"/>
<dbReference type="KEGG" id="ecoc:C3026_02925"/>
<dbReference type="PATRIC" id="fig|1411691.4.peg.1684"/>
<dbReference type="EchoBASE" id="EB0260"/>
<dbReference type="eggNOG" id="COG1020">
    <property type="taxonomic scope" value="Bacteria"/>
</dbReference>
<dbReference type="eggNOG" id="COG3319">
    <property type="taxonomic scope" value="Bacteria"/>
</dbReference>
<dbReference type="HOGENOM" id="CLU_000022_2_13_6"/>
<dbReference type="InParanoid" id="P11454"/>
<dbReference type="OMA" id="IISPQAF"/>
<dbReference type="OrthoDB" id="9757559at2"/>
<dbReference type="PhylomeDB" id="P11454"/>
<dbReference type="BioCyc" id="EcoCyc:ENTF-MONOMER"/>
<dbReference type="BioCyc" id="MetaCyc:ENTF-MONOMER"/>
<dbReference type="BRENDA" id="6.2.1.72">
    <property type="organism ID" value="2026"/>
</dbReference>
<dbReference type="BRENDA" id="6.3.2.14">
    <property type="organism ID" value="2026"/>
</dbReference>
<dbReference type="UniPathway" id="UPA00017"/>
<dbReference type="EvolutionaryTrace" id="P11454"/>
<dbReference type="PRO" id="PR:P11454"/>
<dbReference type="Proteomes" id="UP000000625">
    <property type="component" value="Chromosome"/>
</dbReference>
<dbReference type="GO" id="GO:0005737">
    <property type="term" value="C:cytoplasm"/>
    <property type="evidence" value="ECO:0000318"/>
    <property type="project" value="GO_Central"/>
</dbReference>
<dbReference type="GO" id="GO:0005829">
    <property type="term" value="C:cytosol"/>
    <property type="evidence" value="ECO:0000314"/>
    <property type="project" value="EcoCyc"/>
</dbReference>
<dbReference type="GO" id="GO:0009366">
    <property type="term" value="C:enterobactin synthetase complex"/>
    <property type="evidence" value="ECO:0000314"/>
    <property type="project" value="EcoCyc"/>
</dbReference>
<dbReference type="GO" id="GO:0005886">
    <property type="term" value="C:plasma membrane"/>
    <property type="evidence" value="ECO:0000314"/>
    <property type="project" value="EcoCyc"/>
</dbReference>
<dbReference type="GO" id="GO:0047527">
    <property type="term" value="F:2,3-dihydroxybenzoate-serine ligase activity"/>
    <property type="evidence" value="ECO:0000314"/>
    <property type="project" value="UniProtKB"/>
</dbReference>
<dbReference type="GO" id="GO:0005524">
    <property type="term" value="F:ATP binding"/>
    <property type="evidence" value="ECO:0007669"/>
    <property type="project" value="UniProtKB-KW"/>
</dbReference>
<dbReference type="GO" id="GO:0016779">
    <property type="term" value="F:nucleotidyltransferase activity"/>
    <property type="evidence" value="ECO:0000314"/>
    <property type="project" value="UniProtKB"/>
</dbReference>
<dbReference type="GO" id="GO:0031177">
    <property type="term" value="F:phosphopantetheine binding"/>
    <property type="evidence" value="ECO:0000314"/>
    <property type="project" value="EcoCyc"/>
</dbReference>
<dbReference type="GO" id="GO:0043041">
    <property type="term" value="P:amino acid activation for nonribosomal peptide biosynthetic process"/>
    <property type="evidence" value="ECO:0000314"/>
    <property type="project" value="EcoCyc"/>
</dbReference>
<dbReference type="GO" id="GO:0009239">
    <property type="term" value="P:enterobactin biosynthetic process"/>
    <property type="evidence" value="ECO:0000315"/>
    <property type="project" value="EcoCyc"/>
</dbReference>
<dbReference type="CDD" id="cd17646">
    <property type="entry name" value="A_NRPS_AB3403-like"/>
    <property type="match status" value="1"/>
</dbReference>
<dbReference type="CDD" id="cd19533">
    <property type="entry name" value="starter-C_NRPS"/>
    <property type="match status" value="1"/>
</dbReference>
<dbReference type="FunFam" id="2.30.38.10:FF:000002">
    <property type="entry name" value="Enterobactin synthase component F"/>
    <property type="match status" value="1"/>
</dbReference>
<dbReference type="FunFam" id="3.30.300.30:FF:000010">
    <property type="entry name" value="Enterobactin synthetase component F"/>
    <property type="match status" value="1"/>
</dbReference>
<dbReference type="FunFam" id="3.30.559.10:FF:000020">
    <property type="entry name" value="Enterobactin synthetase component F"/>
    <property type="match status" value="1"/>
</dbReference>
<dbReference type="FunFam" id="3.30.559.30:FF:000004">
    <property type="entry name" value="Enterobactin synthetase component F"/>
    <property type="match status" value="1"/>
</dbReference>
<dbReference type="FunFam" id="3.40.50.1820:FF:000142">
    <property type="entry name" value="Enterobactin synthetase component F"/>
    <property type="match status" value="1"/>
</dbReference>
<dbReference type="FunFam" id="3.40.50.980:FF:000002">
    <property type="entry name" value="Enterobactin synthetase component F"/>
    <property type="match status" value="1"/>
</dbReference>
<dbReference type="FunFam" id="3.40.50.12780:FF:000012">
    <property type="entry name" value="Non-ribosomal peptide synthetase"/>
    <property type="match status" value="1"/>
</dbReference>
<dbReference type="Gene3D" id="3.30.300.30">
    <property type="match status" value="1"/>
</dbReference>
<dbReference type="Gene3D" id="3.40.50.980">
    <property type="match status" value="2"/>
</dbReference>
<dbReference type="Gene3D" id="3.40.50.1820">
    <property type="entry name" value="alpha/beta hydrolase"/>
    <property type="match status" value="1"/>
</dbReference>
<dbReference type="Gene3D" id="3.30.559.10">
    <property type="entry name" value="Chloramphenicol acetyltransferase-like domain"/>
    <property type="match status" value="1"/>
</dbReference>
<dbReference type="Gene3D" id="2.30.38.10">
    <property type="entry name" value="Luciferase, Domain 3"/>
    <property type="match status" value="1"/>
</dbReference>
<dbReference type="Gene3D" id="3.30.559.30">
    <property type="entry name" value="Nonribosomal peptide synthetase, condensation domain"/>
    <property type="match status" value="1"/>
</dbReference>
<dbReference type="InterPro" id="IPR010071">
    <property type="entry name" value="AA_adenyl_dom"/>
</dbReference>
<dbReference type="InterPro" id="IPR029058">
    <property type="entry name" value="AB_hydrolase_fold"/>
</dbReference>
<dbReference type="InterPro" id="IPR036736">
    <property type="entry name" value="ACP-like_sf"/>
</dbReference>
<dbReference type="InterPro" id="IPR045851">
    <property type="entry name" value="AMP-bd_C_sf"/>
</dbReference>
<dbReference type="InterPro" id="IPR020845">
    <property type="entry name" value="AMP-binding_CS"/>
</dbReference>
<dbReference type="InterPro" id="IPR000873">
    <property type="entry name" value="AMP-dep_synth/lig_dom"/>
</dbReference>
<dbReference type="InterPro" id="IPR023213">
    <property type="entry name" value="CAT-like_dom_sf"/>
</dbReference>
<dbReference type="InterPro" id="IPR001242">
    <property type="entry name" value="Condensatn"/>
</dbReference>
<dbReference type="InterPro" id="IPR020806">
    <property type="entry name" value="PKS_PP-bd"/>
</dbReference>
<dbReference type="InterPro" id="IPR020802">
    <property type="entry name" value="PKS_thioesterase"/>
</dbReference>
<dbReference type="InterPro" id="IPR009081">
    <property type="entry name" value="PP-bd_ACP"/>
</dbReference>
<dbReference type="InterPro" id="IPR006162">
    <property type="entry name" value="Ppantetheine_attach_site"/>
</dbReference>
<dbReference type="InterPro" id="IPR001031">
    <property type="entry name" value="Thioesterase"/>
</dbReference>
<dbReference type="NCBIfam" id="TIGR01733">
    <property type="entry name" value="AA-adenyl-dom"/>
    <property type="match status" value="1"/>
</dbReference>
<dbReference type="NCBIfam" id="NF007605">
    <property type="entry name" value="PRK10252.1"/>
    <property type="match status" value="1"/>
</dbReference>
<dbReference type="PANTHER" id="PTHR45527:SF1">
    <property type="entry name" value="FATTY ACID SYNTHASE"/>
    <property type="match status" value="1"/>
</dbReference>
<dbReference type="PANTHER" id="PTHR45527">
    <property type="entry name" value="NONRIBOSOMAL PEPTIDE SYNTHETASE"/>
    <property type="match status" value="1"/>
</dbReference>
<dbReference type="Pfam" id="PF00501">
    <property type="entry name" value="AMP-binding"/>
    <property type="match status" value="1"/>
</dbReference>
<dbReference type="Pfam" id="PF00668">
    <property type="entry name" value="Condensation"/>
    <property type="match status" value="1"/>
</dbReference>
<dbReference type="Pfam" id="PF00550">
    <property type="entry name" value="PP-binding"/>
    <property type="match status" value="1"/>
</dbReference>
<dbReference type="Pfam" id="PF00975">
    <property type="entry name" value="Thioesterase"/>
    <property type="match status" value="1"/>
</dbReference>
<dbReference type="SMART" id="SM00823">
    <property type="entry name" value="PKS_PP"/>
    <property type="match status" value="1"/>
</dbReference>
<dbReference type="SMART" id="SM00824">
    <property type="entry name" value="PKS_TE"/>
    <property type="match status" value="1"/>
</dbReference>
<dbReference type="SUPFAM" id="SSF56801">
    <property type="entry name" value="Acetyl-CoA synthetase-like"/>
    <property type="match status" value="1"/>
</dbReference>
<dbReference type="SUPFAM" id="SSF47336">
    <property type="entry name" value="ACP-like"/>
    <property type="match status" value="1"/>
</dbReference>
<dbReference type="SUPFAM" id="SSF53474">
    <property type="entry name" value="alpha/beta-Hydrolases"/>
    <property type="match status" value="1"/>
</dbReference>
<dbReference type="SUPFAM" id="SSF52777">
    <property type="entry name" value="CoA-dependent acyltransferases"/>
    <property type="match status" value="2"/>
</dbReference>
<dbReference type="PROSITE" id="PS00455">
    <property type="entry name" value="AMP_BINDING"/>
    <property type="match status" value="1"/>
</dbReference>
<dbReference type="PROSITE" id="PS50075">
    <property type="entry name" value="CARRIER"/>
    <property type="match status" value="1"/>
</dbReference>
<dbReference type="PROSITE" id="PS00012">
    <property type="entry name" value="PHOSPHOPANTETHEINE"/>
    <property type="match status" value="1"/>
</dbReference>
<gene>
    <name evidence="14" type="primary">entF</name>
    <name type="ordered locus">b0586</name>
    <name type="ordered locus">JW0578</name>
</gene>
<proteinExistence type="evidence at protein level"/>
<comment type="function">
    <text evidence="3 5 6 8 13">Involved in the biosynthesis of the siderophore enterobactin (enterochelin), which is a macrocyclic trimeric lactone of N-(2,3-dihydroxybenzoyl)-serine (PubMed:1338974, PubMed:1826089, PubMed:216414, PubMed:9485415). EntF catalyzes the activation of L-serine via ATP-dependent PPi exchange reaction to form seryladenylate (PubMed:10688898, PubMed:1338974, PubMed:1826089, PubMed:9485415). Activated L-serine is loaded onto the peptidyl carrier domain via a thioester linkage to the phosphopanthetheine moiety, forming seryl-S-Ppant-EntF (PubMed:9485415). EntF acts then as the sole catalyst for the formation of the three amide and three ester linkages found in enterobactin, using seryladenylate and 2,3-dihydroxybenzoate-S-Ppant-EntB (DHB-S-Ppant-EntB) as substrates, via the formation of a DHB-Ser-S-Ppant-EntF intermediate (PubMed:9485415).</text>
</comment>
<comment type="catalytic activity">
    <reaction evidence="8 13">
        <text>3 2,3-dihydroxybenzoate + 3 L-serine + 6 ATP = enterobactin + 6 AMP + 6 diphosphate + 4 H(+)</text>
        <dbReference type="Rhea" id="RHEA:30571"/>
        <dbReference type="ChEBI" id="CHEBI:15378"/>
        <dbReference type="ChEBI" id="CHEBI:30616"/>
        <dbReference type="ChEBI" id="CHEBI:33019"/>
        <dbReference type="ChEBI" id="CHEBI:33384"/>
        <dbReference type="ChEBI" id="CHEBI:36654"/>
        <dbReference type="ChEBI" id="CHEBI:77805"/>
        <dbReference type="ChEBI" id="CHEBI:456215"/>
        <dbReference type="EC" id="6.3.2.14"/>
    </reaction>
</comment>
<comment type="catalytic activity">
    <reaction evidence="13 17 18 19 20">
        <text>holo-[peptidyl-carrier protein] + L-serine + ATP = L-seryl-[peptidyl-carrier protein] + AMP + diphosphate</text>
        <dbReference type="Rhea" id="RHEA:61704"/>
        <dbReference type="Rhea" id="RHEA-COMP:11480"/>
        <dbReference type="Rhea" id="RHEA-COMP:15913"/>
        <dbReference type="ChEBI" id="CHEBI:30616"/>
        <dbReference type="ChEBI" id="CHEBI:33019"/>
        <dbReference type="ChEBI" id="CHEBI:33384"/>
        <dbReference type="ChEBI" id="CHEBI:64479"/>
        <dbReference type="ChEBI" id="CHEBI:144955"/>
        <dbReference type="ChEBI" id="CHEBI:456215"/>
        <dbReference type="EC" id="6.2.1.72"/>
    </reaction>
</comment>
<comment type="cofactor">
    <cofactor evidence="2 6 10 11 13">
        <name>pantetheine 4'-phosphate</name>
        <dbReference type="ChEBI" id="CHEBI:47942"/>
    </cofactor>
    <text evidence="2 10 11">Binds 1 phosphopantetheine covalently.</text>
</comment>
<comment type="activity regulation">
    <text evidence="11">Adenylation activity is increased in the presence of the MbtH-like protein YbdZ.</text>
</comment>
<comment type="biophysicochemical properties">
    <kinetics>
        <KM evidence="5">0.26 mM for L-serine</KM>
        <KM evidence="5">0.75 mM for ATP</KM>
        <KM evidence="5">5 mM for O-acetyl-L-serine</KM>
        <KM evidence="5">8 mM for L-beta-chloroalanine</KM>
        <KM evidence="5">3.1 mM for S-methyl-L-cysteine</KM>
        <text evidence="5">kcat is 760 min(-1) with L-serine as substrate. kcat is 660 min(-1) with ATP as substrate. kcat is 720 min(-1) with O-acetyl-L-serine as substrate. kcat is 870 min(-1) with L-beta-chloroalanine as substrate. kcat is 38 min(-1) with S-methyl-L-cysteine as substrate.</text>
    </kinetics>
</comment>
<comment type="pathway">
    <text evidence="6 8 13">Siderophore biosynthesis; enterobactin biosynthesis.</text>
</comment>
<comment type="subunit">
    <text evidence="8 11 13">Proteins EntB, EntD, EntE and EntF are the component of the enterobactin synthase (PubMed:216414, PubMed:9485415). Components probably do not form a stable complex (PubMed:9485415). EntF acts as a catalytic monomer (PubMed:9485415). Interacts with the MbtH-like protein YbdZ. YbdZ binds to the adenylation domain, but does not alter the structure of the domain (PubMed:27597544).</text>
</comment>
<comment type="subcellular location">
    <subcellularLocation>
        <location evidence="4">Cytoplasm</location>
    </subcellularLocation>
    <text evidence="4">Membrane-associated.</text>
</comment>
<comment type="induction">
    <text evidence="12">Transcriptionally regulated by iron and the fur protein.</text>
</comment>
<comment type="domain">
    <text evidence="2 7 9 15">Modular protein that contains an elongation/condensation domain, an adenylation domain which activates the serine residue into an aminoacyl-AMP ester, a peptidyl carrier protein domain which bears a phosphopantetheinyl arm to attach the activated amino acid and a thioesterase domain (Probable). The thioesterase domain is both a cyclotrimerizing lactone synthetase and an elongation catalyst for ester-bond formation between covalently tethered DHB-Ser moieties (PubMed:10375542). The carrier-thioesterase di-domain forms a compact structure with a well-defined domain interface; the two active sites are at a suitable distance for substrate transfer from the peptidyl carrier protein domain to the thioesterase domain (PubMed:18704088). Phosphopantetheinylation leads to enhanced interaction between the two domains (PubMed:22118682).</text>
</comment>
<comment type="PTM">
    <text evidence="13">4'-phosphopantetheine is transferred from CoA to a specific serine of apo-EntF by EntD (PubMed:9485415). Holo-EntF so formed is then acylated with seryl-AMP (PubMed:9485415).</text>
</comment>
<comment type="similarity">
    <text evidence="15">Belongs to the ATP-dependent AMP-binding enzyme family. EntF subfamily.</text>
</comment>
<comment type="sequence caution" evidence="15">
    <conflict type="erroneous initiation">
        <sequence resource="EMBL-CDS" id="AAB40785"/>
    </conflict>
    <text>Extended N-terminus.</text>
</comment>
<accession>P11454</accession>
<accession>P75723</accession>
<accession>P77095</accession>
<accession>Q2MBL5</accession>
<organism>
    <name type="scientific">Escherichia coli (strain K12)</name>
    <dbReference type="NCBI Taxonomy" id="83333"/>
    <lineage>
        <taxon>Bacteria</taxon>
        <taxon>Pseudomonadati</taxon>
        <taxon>Pseudomonadota</taxon>
        <taxon>Gammaproteobacteria</taxon>
        <taxon>Enterobacterales</taxon>
        <taxon>Enterobacteriaceae</taxon>
        <taxon>Escherichia</taxon>
    </lineage>
</organism>
<name>ENTF_ECOLI</name>
<keyword id="KW-0002">3D-structure</keyword>
<keyword id="KW-0067">ATP-binding</keyword>
<keyword id="KW-0963">Cytoplasm</keyword>
<keyword id="KW-0903">Direct protein sequencing</keyword>
<keyword id="KW-0259">Enterobactin biosynthesis</keyword>
<keyword id="KW-0436">Ligase</keyword>
<keyword id="KW-0511">Multifunctional enzyme</keyword>
<keyword id="KW-0547">Nucleotide-binding</keyword>
<keyword id="KW-0596">Phosphopantetheine</keyword>
<keyword id="KW-0597">Phosphoprotein</keyword>
<keyword id="KW-1185">Reference proteome</keyword>
<keyword id="KW-0808">Transferase</keyword>
<sequence>MSQHLPLVAAQPGIWMAEKLSELPSAWSVAHYVELTGEVDSPLLARAVVAGLAQADTLRMRFTEDNGEVWQWVDDALTFELPEIIDLRTNIDPHGTAQALMQADLQQDLRVDSGKPLVFHQLIQVADNRWYWYQRYHHLLVDGFSFPAITRQIANIYCTWLRGEPTPASPFTPFADVVEEYQQYRESEAWQRDAAFWAEQRRQLPPPASLSPAPLPGRSASADILRLKLEFTDGEFRQLATQLSGVQRTDLALALAALWLGRLCNRMDYAAGFIFMRRLGSAALTATGPVLNVLPLGIHIAAQETLPELATRLAAQLKKMRRHQRYDAEQIVRDSGRAAGDEPLFGPVLNIKVFDYQLDIPDVQAQTHTLATGPVNDLELALFPDVHGDLSIEILANKQRYDEPTLIQHAERLKMLIAQFAADPALLCGDVDIMLPGEYAQLAQLNATQVEIPETTLSALVAEQAAKTPDAPALADARYLFSYREMREQVVALANLLRERGVKPGDSVAVALPRSVFLTLALHAIVEAGAAWLPLDTGYPDDRLKMMLEDARPSLLITTDDQLPRFSDVPNLTSLCYNAPLTPQGSAPLQLSQPHHTAYIIFTSGSTGRPKGVMVGQTAIVNRLLWMQNHYPLTGEDVVAQKTPCSFDVSVWEFFWPFIAGAKLVMAEPEAHRDPLAMQQFFAEYGVTTTHFVPSMLAAFVASLTPQTARQSCATLKQVFCSGEALPADLCREWQQLTGAPLHNLYGPTEAAVDVSWYPAFGEELAQVRGSSVPIGYPVWNTGLRILDAMMHPVPPGVAGDLYLTGIQLAQGYLGRPDLTASRFIADPFAPGERMYRTGDVARWLDNGAVEYLGRSDDQLKIRGQRIELGEIDRVMQALPDVEQAVTHACVINQAAATGGDARQLVGYLVSQSGLPLDTSALQAQLRETLPPHMVPVVLLQLPQLPLSANGKLDRKALPLPELKAQAPGRAPKAGSETIIAAAFSSLLGCDVQDADADFFALGGHSLLAMKLAAQLSRQVARQVTPGQVMVASTVAKLATIIDAEEDSTRRMGFETILPLREGNGPTLFCFHPASGFAWQFSVLSRYLDPQWSIIGIQSPRPNGPMQTAANLDEVCEAHLATLLEQQPHGPYYLLGYSLGGTLAQGIAARLRARGEQVAFLGLLDTWPPETQNWQEKEANGLDPEVLAEINREREAFLAAQQGSTSTELFTTIEGNYADAVRLLTTAHSVPFDGKATLFVAERTLQEGMSPERAWSPWIAELDIYRQDCAHVDIISPGTFEKIGPIIRATLNR</sequence>
<reference key="1">
    <citation type="journal article" date="1991" name="Biochemistry">
        <title>Biosynthesis of the Escherichia coli siderophore enterobactin: sequence of the entF gene, expression and purification of EntF, and analysis of covalent phosphopantetheine.</title>
        <authorList>
            <person name="Rusnak F."/>
            <person name="Sakaitani M."/>
            <person name="Drueckhammer D."/>
            <person name="Reichert J."/>
            <person name="Walsh C.T."/>
        </authorList>
    </citation>
    <scope>NUCLEOTIDE SEQUENCE [GENOMIC DNA]</scope>
    <scope>PROTEIN SEQUENCE OF 1-12</scope>
    <scope>FUNCTION AS AN L-SERINE-ACTIVATING ENZYME</scope>
    <scope>COFACTOR</scope>
    <scope>PATHWAY</scope>
    <source>
        <strain>K12</strain>
    </source>
</reference>
<reference key="2">
    <citation type="submission" date="1997-01" db="EMBL/GenBank/DDBJ databases">
        <title>Sequence of minutes 4-25 of Escherichia coli.</title>
        <authorList>
            <person name="Chung E."/>
            <person name="Allen E."/>
            <person name="Araujo R."/>
            <person name="Aparicio A.M."/>
            <person name="Davis K."/>
            <person name="Duncan M."/>
            <person name="Federspiel N."/>
            <person name="Hyman R."/>
            <person name="Kalman S."/>
            <person name="Komp C."/>
            <person name="Kurdi O."/>
            <person name="Lew H."/>
            <person name="Lin D."/>
            <person name="Namath A."/>
            <person name="Oefner P."/>
            <person name="Roberts D."/>
            <person name="Schramm S."/>
            <person name="Davis R.W."/>
        </authorList>
    </citation>
    <scope>NUCLEOTIDE SEQUENCE [LARGE SCALE GENOMIC DNA]</scope>
    <source>
        <strain>K12 / MG1655 / ATCC 47076</strain>
    </source>
</reference>
<reference key="3">
    <citation type="journal article" date="1997" name="Science">
        <title>The complete genome sequence of Escherichia coli K-12.</title>
        <authorList>
            <person name="Blattner F.R."/>
            <person name="Plunkett G. III"/>
            <person name="Bloch C.A."/>
            <person name="Perna N.T."/>
            <person name="Burland V."/>
            <person name="Riley M."/>
            <person name="Collado-Vides J."/>
            <person name="Glasner J.D."/>
            <person name="Rode C.K."/>
            <person name="Mayhew G.F."/>
            <person name="Gregor J."/>
            <person name="Davis N.W."/>
            <person name="Kirkpatrick H.A."/>
            <person name="Goeden M.A."/>
            <person name="Rose D.J."/>
            <person name="Mau B."/>
            <person name="Shao Y."/>
        </authorList>
    </citation>
    <scope>NUCLEOTIDE SEQUENCE [LARGE SCALE GENOMIC DNA]</scope>
    <source>
        <strain>K12 / MG1655 / ATCC 47076</strain>
    </source>
</reference>
<reference key="4">
    <citation type="journal article" date="2006" name="Mol. Syst. Biol.">
        <title>Highly accurate genome sequences of Escherichia coli K-12 strains MG1655 and W3110.</title>
        <authorList>
            <person name="Hayashi K."/>
            <person name="Morooka N."/>
            <person name="Yamamoto Y."/>
            <person name="Fujita K."/>
            <person name="Isono K."/>
            <person name="Choi S."/>
            <person name="Ohtsubo E."/>
            <person name="Baba T."/>
            <person name="Wanner B.L."/>
            <person name="Mori H."/>
            <person name="Horiuchi T."/>
        </authorList>
    </citation>
    <scope>NUCLEOTIDE SEQUENCE [LARGE SCALE GENOMIC DNA]</scope>
    <source>
        <strain>K12 / W3110 / ATCC 27325 / DSM 5911</strain>
    </source>
</reference>
<reference key="5">
    <citation type="journal article" date="1987" name="J. Bacteriol.">
        <title>Molecular characterization of the Escherichia coli enterobactin cistron entF and coupled expression of entF and the fes gene.</title>
        <authorList>
            <person name="Pettis G.S."/>
            <person name="McIntosh M.A."/>
        </authorList>
    </citation>
    <scope>NUCLEOTIDE SEQUENCE [GENOMIC DNA] OF 1-34</scope>
    <scope>INDUCTION</scope>
    <source>
        <strain>K12 / MC4100 / ATCC 35695 / DSM 6574</strain>
    </source>
</reference>
<reference key="6">
    <citation type="journal article" date="1988" name="J. Biol. Chem.">
        <title>Transcriptional mapping and nucleotide sequence of the Escherichia coli fepA-fes enterobactin region. Identification of a unique iron-regulated bidirectional promoter.</title>
        <authorList>
            <person name="Pettis G.S."/>
            <person name="Brickman T.J."/>
            <person name="McIntosh M.A."/>
        </authorList>
    </citation>
    <scope>NUCLEOTIDE SEQUENCE [GENOMIC DNA] OF 1-34</scope>
    <scope>PROTEIN SEQUENCE OF 1-12</scope>
</reference>
<reference key="7">
    <citation type="journal article" date="1979" name="Biochim. Biophys. Acta">
        <title>Biosynthesis of enterochelin in Escherichia coli K-12: separation of the polypeptides coded for by the entD, E, F and G genes.</title>
        <authorList>
            <person name="Woodrow G.C."/>
            <person name="Young I.G."/>
            <person name="Gibson F."/>
        </authorList>
    </citation>
    <scope>FUNCTION</scope>
    <scope>CATALYTIC ACTIVITY</scope>
    <scope>PATHWAY</scope>
    <scope>SUBUNIT</scope>
    <source>
        <strain>K12</strain>
    </source>
</reference>
<reference key="8">
    <citation type="journal article" date="1992" name="Protein Sci.">
        <title>Characterization of EntF as a serine-activating enzyme.</title>
        <authorList>
            <person name="Reichert J."/>
            <person name="Sakaitani M."/>
            <person name="Walsh C.T."/>
        </authorList>
    </citation>
    <scope>FUNCTION AS AN L-SERINE-ACTIVATING ENZYME</scope>
    <scope>BIOPHYSICOCHEMICAL PROPERTIES</scope>
</reference>
<reference key="9">
    <citation type="journal article" date="1997" name="Electrophoresis">
        <title>Escherichia coli proteome analysis using the gene-protein database.</title>
        <authorList>
            <person name="VanBogelen R.A."/>
            <person name="Abshire K.Z."/>
            <person name="Moldover B."/>
            <person name="Olson E.R."/>
            <person name="Neidhardt F.C."/>
        </authorList>
    </citation>
    <scope>IDENTIFICATION BY 2D-GEL</scope>
</reference>
<reference key="10">
    <citation type="journal article" date="1998" name="Biochemistry">
        <title>Reconstitution and characterization of the Escherichia coli enterobactin synthetase from EntB, EntE, and EntF.</title>
        <authorList>
            <person name="Gehring A.M."/>
            <person name="Mori I."/>
            <person name="Walsh C.T."/>
        </authorList>
    </citation>
    <scope>FUNCTION</scope>
    <scope>CATALYTIC ACTIVITY</scope>
    <scope>COFACTOR</scope>
    <scope>PATHWAY</scope>
    <scope>SUBUNIT</scope>
    <scope>PHOSPHOPANTETHEINYLATION BY ENTD</scope>
    <scope>MUTAGENESIS OF SER-1138</scope>
</reference>
<reference key="11">
    <citation type="journal article" date="1999" name="Chem. Biol.">
        <title>Assembly line enzymology by multimodular nonribosomal peptide synthetases: the thioesterase domain of E. coli EntF catalyzes both elongation and cyclolactonization.</title>
        <authorList>
            <person name="Shaw-Reid C.A."/>
            <person name="Kelleher N.L."/>
            <person name="Losey H.C."/>
            <person name="Gehring A.M."/>
            <person name="Berg C."/>
            <person name="Walsh C.T."/>
        </authorList>
    </citation>
    <scope>COFACTOR</scope>
    <scope>DOMAIN</scope>
    <scope>PHOSPHOPANTETHEINYLATION AT SER-1006</scope>
    <scope>ACTIVE SITE</scope>
    <scope>MUTAGENESIS OF SER-1138; ASP-1165 AND HIS-1271</scope>
</reference>
<reference key="12">
    <citation type="journal article" date="2000" name="J. Bacteriol.">
        <title>Membrane association of the Escherichia coli enterobactin synthase proteins EntB/G, EntE, and EntF.</title>
        <authorList>
            <person name="Hantash F.M."/>
            <person name="Earhart C.F."/>
        </authorList>
    </citation>
    <scope>SUBCELLULAR LOCATION</scope>
</reference>
<reference key="13">
    <citation type="journal article" date="2000" name="Proc. Natl. Acad. Sci. U.S.A.">
        <title>The EntF and EntE adenylation domains of Escherichia coli enterobactin synthetase: sequestration and selectivity in acyl-AMP transfers to thiolation domain cosubstrates.</title>
        <authorList>
            <person name="Ehmann D.E."/>
            <person name="Shaw-Reid C.A."/>
            <person name="Losey H.C."/>
            <person name="Walsh C.T."/>
        </authorList>
    </citation>
    <scope>FUNCTION AS AN L-SERINE-ACTIVATING ENZYME</scope>
</reference>
<reference evidence="21" key="14">
    <citation type="journal article" date="2008" name="Nature">
        <title>Dynamic thiolation-thioesterase structure of a non-ribosomal peptide synthetase.</title>
        <authorList>
            <person name="Frueh D.P."/>
            <person name="Arthanari H."/>
            <person name="Koglin A."/>
            <person name="Vosburg D.A."/>
            <person name="Bennett A.E."/>
            <person name="Walsh C.T."/>
            <person name="Wagner G."/>
        </authorList>
    </citation>
    <scope>STRUCTURE BY NMR OF 960-1293</scope>
    <scope>DOMAIN</scope>
</reference>
<reference evidence="22" key="15">
    <citation type="journal article" date="2011" name="Chem. Biol.">
        <title>Structural basis for phosphopantetheinyl carrier domain interactions in the terminal module of nonribosomal peptide synthetases.</title>
        <authorList>
            <person name="Liu Y."/>
            <person name="Zheng T."/>
            <person name="Bruner S.D."/>
        </authorList>
    </citation>
    <scope>X-RAY CRYSTALLOGRAPHY (1.90 ANGSTROMS) OF 965-1293</scope>
    <scope>DOMAIN</scope>
    <scope>MUTAGENESIS OF PHE-1077; TRP-1079 AND GLN-1080</scope>
</reference>
<reference evidence="25" key="16">
    <citation type="journal article" date="2016" name="Nature">
        <title>Structures of two distinct conformations of holo-non-ribosomal peptide synthetases.</title>
        <authorList>
            <person name="Drake E.J."/>
            <person name="Miller B.R."/>
            <person name="Shi C."/>
            <person name="Tarrasch J.T."/>
            <person name="Sundlov J.A."/>
            <person name="Allen C.L."/>
            <person name="Skiniotis G."/>
            <person name="Aldrich C.C."/>
            <person name="Gulick A.M."/>
        </authorList>
    </citation>
    <scope>X-RAY CRYSTALLOGRAPHY (2.80 ANGSTROMS)</scope>
    <scope>COFACTOR</scope>
</reference>
<reference evidence="23 24" key="17">
    <citation type="journal article" date="2016" name="J. Biol. Chem.">
        <title>Structures of a nonribosomal peptide synthetase module bound to MbtH-like proteins support a highly dynamic domain architecture.</title>
        <authorList>
            <person name="Miller B.R."/>
            <person name="Drake E.J."/>
            <person name="Shi C."/>
            <person name="Aldrich C.C."/>
            <person name="Gulick A.M."/>
        </authorList>
    </citation>
    <scope>X-RAY CRYSTALLOGRAPHY (3.00 ANGSTROMS) IN COMPLEX WITH THE MBTH-LIKE PROTEIN YBDZ</scope>
    <scope>COFACTOR</scope>
    <scope>ACTIVITY REGULATION</scope>
</reference>
<protein>
    <recommendedName>
        <fullName evidence="15">Enterobactin synthase component F</fullName>
        <ecNumber evidence="8 13">6.3.2.14</ecNumber>
    </recommendedName>
    <alternativeName>
        <fullName>Enterochelin synthase F</fullName>
    </alternativeName>
    <alternativeName>
        <fullName evidence="15">Nonribosomal peptide synthetase EntF</fullName>
    </alternativeName>
    <domain>
        <recommendedName>
            <fullName evidence="15">L-serine--[L-seryl-carrier protein] ligase</fullName>
            <ecNumber evidence="13 17 18 19 20">6.2.1.72</ecNumber>
        </recommendedName>
        <alternativeName>
            <fullName>Serine-activating enzyme</fullName>
        </alternativeName>
        <alternativeName>
            <fullName>Seryl-AMP ligase</fullName>
        </alternativeName>
    </domain>
</protein>
<feature type="chain" id="PRO_0000193077" description="Enterobactin synthase component F">
    <location>
        <begin position="1"/>
        <end position="1293"/>
    </location>
</feature>
<feature type="domain" description="Carrier" evidence="1">
    <location>
        <begin position="971"/>
        <end position="1046"/>
    </location>
</feature>
<feature type="region of interest" description="Elongation/condensation" evidence="15">
    <location>
        <begin position="1"/>
        <end position="301"/>
    </location>
</feature>
<feature type="region of interest" description="Adenylatione" evidence="15">
    <location>
        <begin position="482"/>
        <end position="887"/>
    </location>
</feature>
<feature type="region of interest" description="Thioesterase" evidence="15">
    <location>
        <begin position="1066"/>
        <end position="1293"/>
    </location>
</feature>
<feature type="active site" description="Proton acceptor; for thioesterase activity" evidence="16">
    <location>
        <position position="1271"/>
    </location>
</feature>
<feature type="modified residue" description="O-(pantetheine 4'-phosphoryl)serine" evidence="2 10 11">
    <location>
        <position position="1006"/>
    </location>
</feature>
<feature type="mutagenesis site" description="Retains 2% of activity." evidence="9">
    <original>F</original>
    <variation>A</variation>
    <location>
        <position position="1077"/>
    </location>
</feature>
<feature type="mutagenesis site" description="Abolishes enterobactin production." evidence="9">
    <original>W</original>
    <variation>A</variation>
    <location>
        <position position="1079"/>
    </location>
</feature>
<feature type="mutagenesis site" description="Retains 50% of activity." evidence="9">
    <original>Q</original>
    <variation>A</variation>
    <location>
        <position position="1080"/>
    </location>
</feature>
<feature type="mutagenesis site" description="No enterobactin synthase activity. This mutant holo-EntF is still able to adenylate serine and to autoacylate itself with serine." evidence="13">
    <original>S</original>
    <variation>A</variation>
    <location>
        <position position="1138"/>
    </location>
</feature>
<feature type="mutagenesis site" description="1000-fold decrease in kcat. Releases both enterobactin an linear dimers (DHB-Ser)2." evidence="2">
    <original>S</original>
    <variation>C</variation>
    <location>
        <position position="1138"/>
    </location>
</feature>
<feature type="mutagenesis site" description="20-fold decrease in kcat." evidence="2">
    <original>D</original>
    <variation>A</variation>
    <location>
        <position position="1165"/>
    </location>
</feature>
<feature type="mutagenesis site" description="200-fold decrease in kcat." evidence="2">
    <original>D</original>
    <variation>S</variation>
    <location>
        <position position="1165"/>
    </location>
</feature>
<feature type="mutagenesis site" description="10000-fold decrease in kcat. Releases only enterobactin, but accumulates both DHB-Ser-O-TE and (DHB-Ser)2-O-TE acyl enzyme intermediates." evidence="2">
    <original>H</original>
    <variation>A</variation>
    <location>
        <position position="1271"/>
    </location>
</feature>
<feature type="sequence conflict" description="In Ref. 1; AAA92015." evidence="15" ref="1">
    <original>QL</original>
    <variation>HV</variation>
    <location>
        <begin position="441"/>
        <end position="442"/>
    </location>
</feature>
<feature type="helix" evidence="30">
    <location>
        <begin position="11"/>
        <end position="20"/>
    </location>
</feature>
<feature type="strand" evidence="30">
    <location>
        <begin position="23"/>
        <end position="25"/>
    </location>
</feature>
<feature type="strand" evidence="30">
    <location>
        <begin position="28"/>
        <end position="37"/>
    </location>
</feature>
<feature type="helix" evidence="30">
    <location>
        <begin position="41"/>
        <end position="54"/>
    </location>
</feature>
<feature type="helix" evidence="30">
    <location>
        <begin position="56"/>
        <end position="59"/>
    </location>
</feature>
<feature type="strand" evidence="30">
    <location>
        <begin position="60"/>
        <end position="65"/>
    </location>
</feature>
<feature type="strand" evidence="30">
    <location>
        <begin position="68"/>
        <end position="73"/>
    </location>
</feature>
<feature type="strand" evidence="30">
    <location>
        <begin position="83"/>
        <end position="85"/>
    </location>
</feature>
<feature type="strand" evidence="30">
    <location>
        <begin position="88"/>
        <end position="92"/>
    </location>
</feature>
<feature type="helix" evidence="30">
    <location>
        <begin position="95"/>
        <end position="104"/>
    </location>
</feature>
<feature type="helix" evidence="30">
    <location>
        <begin position="111"/>
        <end position="113"/>
    </location>
</feature>
<feature type="strand" evidence="30">
    <location>
        <begin position="117"/>
        <end position="123"/>
    </location>
</feature>
<feature type="strand" evidence="30">
    <location>
        <begin position="126"/>
        <end position="128"/>
    </location>
</feature>
<feature type="strand" evidence="30">
    <location>
        <begin position="130"/>
        <end position="137"/>
    </location>
</feature>
<feature type="turn" evidence="30">
    <location>
        <begin position="138"/>
        <end position="140"/>
    </location>
</feature>
<feature type="turn" evidence="30">
    <location>
        <begin position="143"/>
        <end position="145"/>
    </location>
</feature>
<feature type="helix" evidence="30">
    <location>
        <begin position="146"/>
        <end position="161"/>
    </location>
</feature>
<feature type="helix" evidence="30">
    <location>
        <begin position="174"/>
        <end position="185"/>
    </location>
</feature>
<feature type="helix" evidence="30">
    <location>
        <begin position="188"/>
        <end position="203"/>
    </location>
</feature>
<feature type="strand" evidence="30">
    <location>
        <begin position="210"/>
        <end position="213"/>
    </location>
</feature>
<feature type="strand" evidence="30">
    <location>
        <begin position="224"/>
        <end position="231"/>
    </location>
</feature>
<feature type="helix" evidence="30">
    <location>
        <begin position="235"/>
        <end position="243"/>
    </location>
</feature>
<feature type="helix" evidence="30">
    <location>
        <begin position="249"/>
        <end position="264"/>
    </location>
</feature>
<feature type="strand" evidence="30">
    <location>
        <begin position="267"/>
        <end position="275"/>
    </location>
</feature>
<feature type="helix" evidence="30">
    <location>
        <begin position="282"/>
        <end position="285"/>
    </location>
</feature>
<feature type="strand" evidence="30">
    <location>
        <begin position="292"/>
        <end position="299"/>
    </location>
</feature>
<feature type="helix" evidence="30">
    <location>
        <begin position="306"/>
        <end position="322"/>
    </location>
</feature>
<feature type="turn" evidence="30">
    <location>
        <begin position="323"/>
        <end position="325"/>
    </location>
</feature>
<feature type="helix" evidence="30">
    <location>
        <begin position="328"/>
        <end position="334"/>
    </location>
</feature>
<feature type="strand" evidence="30">
    <location>
        <begin position="346"/>
        <end position="350"/>
    </location>
</feature>
<feature type="strand" evidence="30">
    <location>
        <begin position="367"/>
        <end position="371"/>
    </location>
</feature>
<feature type="strand" evidence="30">
    <location>
        <begin position="376"/>
        <end position="384"/>
    </location>
</feature>
<feature type="strand" evidence="30">
    <location>
        <begin position="390"/>
        <end position="397"/>
    </location>
</feature>
<feature type="turn" evidence="30">
    <location>
        <begin position="398"/>
        <end position="400"/>
    </location>
</feature>
<feature type="helix" evidence="30">
    <location>
        <begin position="403"/>
        <end position="422"/>
    </location>
</feature>
<feature type="helix" evidence="30">
    <location>
        <begin position="428"/>
        <end position="430"/>
    </location>
</feature>
<feature type="helix" evidence="30">
    <location>
        <begin position="438"/>
        <end position="445"/>
    </location>
</feature>
<feature type="helix" evidence="30">
    <location>
        <begin position="457"/>
        <end position="467"/>
    </location>
</feature>
<feature type="strand" evidence="30">
    <location>
        <begin position="471"/>
        <end position="475"/>
    </location>
</feature>
<feature type="strand" evidence="30">
    <location>
        <begin position="480"/>
        <end position="482"/>
    </location>
</feature>
<feature type="helix" evidence="30">
    <location>
        <begin position="483"/>
        <end position="499"/>
    </location>
</feature>
<feature type="strand" evidence="30">
    <location>
        <begin position="507"/>
        <end position="510"/>
    </location>
</feature>
<feature type="helix" evidence="30">
    <location>
        <begin position="516"/>
        <end position="527"/>
    </location>
</feature>
<feature type="strand" evidence="30">
    <location>
        <begin position="531"/>
        <end position="534"/>
    </location>
</feature>
<feature type="helix" evidence="30">
    <location>
        <begin position="541"/>
        <end position="551"/>
    </location>
</feature>
<feature type="strand" evidence="30">
    <location>
        <begin position="554"/>
        <end position="558"/>
    </location>
</feature>
<feature type="turn" evidence="30">
    <location>
        <begin position="560"/>
        <end position="564"/>
    </location>
</feature>
<feature type="helix" evidence="30">
    <location>
        <begin position="565"/>
        <end position="568"/>
    </location>
</feature>
<feature type="strand" evidence="28">
    <location>
        <begin position="569"/>
        <end position="571"/>
    </location>
</feature>
<feature type="strand" evidence="30">
    <location>
        <begin position="574"/>
        <end position="576"/>
    </location>
</feature>
<feature type="strand" evidence="30">
    <location>
        <begin position="596"/>
        <end position="603"/>
    </location>
</feature>
<feature type="turn" evidence="30">
    <location>
        <begin position="606"/>
        <end position="608"/>
    </location>
</feature>
<feature type="strand" evidence="30">
    <location>
        <begin position="611"/>
        <end position="616"/>
    </location>
</feature>
<feature type="helix" evidence="30">
    <location>
        <begin position="617"/>
        <end position="630"/>
    </location>
</feature>
<feature type="strand" evidence="30">
    <location>
        <begin position="638"/>
        <end position="641"/>
    </location>
</feature>
<feature type="helix" evidence="30">
    <location>
        <begin position="650"/>
        <end position="660"/>
    </location>
</feature>
<feature type="strand" evidence="30">
    <location>
        <begin position="663"/>
        <end position="666"/>
    </location>
</feature>
<feature type="helix" evidence="30">
    <location>
        <begin position="671"/>
        <end position="673"/>
    </location>
</feature>
<feature type="helix" evidence="30">
    <location>
        <begin position="675"/>
        <end position="684"/>
    </location>
</feature>
<feature type="strand" evidence="30">
    <location>
        <begin position="689"/>
        <end position="692"/>
    </location>
</feature>
<feature type="helix" evidence="30">
    <location>
        <begin position="694"/>
        <end position="702"/>
    </location>
</feature>
<feature type="helix" evidence="30">
    <location>
        <begin position="706"/>
        <end position="712"/>
    </location>
</feature>
<feature type="helix" evidence="28">
    <location>
        <begin position="713"/>
        <end position="715"/>
    </location>
</feature>
<feature type="strand" evidence="30">
    <location>
        <begin position="718"/>
        <end position="724"/>
    </location>
</feature>
<feature type="helix" evidence="30">
    <location>
        <begin position="728"/>
        <end position="738"/>
    </location>
</feature>
<feature type="strand" evidence="30">
    <location>
        <begin position="742"/>
        <end position="746"/>
    </location>
</feature>
<feature type="strand" evidence="30">
    <location>
        <begin position="751"/>
        <end position="753"/>
    </location>
</feature>
<feature type="strand" evidence="30">
    <location>
        <begin position="755"/>
        <end position="759"/>
    </location>
</feature>
<feature type="helix" evidence="30">
    <location>
        <begin position="762"/>
        <end position="766"/>
    </location>
</feature>
<feature type="strand" evidence="30">
    <location>
        <begin position="770"/>
        <end position="772"/>
    </location>
</feature>
<feature type="strand" evidence="30">
    <location>
        <begin position="776"/>
        <end position="778"/>
    </location>
</feature>
<feature type="strand" evidence="30">
    <location>
        <begin position="782"/>
        <end position="787"/>
    </location>
</feature>
<feature type="strand" evidence="30">
    <location>
        <begin position="800"/>
        <end position="806"/>
    </location>
</feature>
<feature type="strand" evidence="28">
    <location>
        <begin position="811"/>
        <end position="814"/>
    </location>
</feature>
<feature type="helix" evidence="30">
    <location>
        <begin position="817"/>
        <end position="823"/>
    </location>
</feature>
<feature type="strand" evidence="30">
    <location>
        <begin position="824"/>
        <end position="826"/>
    </location>
</feature>
<feature type="strand" evidence="30">
    <location>
        <begin position="834"/>
        <end position="844"/>
    </location>
</feature>
<feature type="strand" evidence="30">
    <location>
        <begin position="850"/>
        <end position="862"/>
    </location>
</feature>
<feature type="strand" evidence="30">
    <location>
        <begin position="865"/>
        <end position="868"/>
    </location>
</feature>
<feature type="helix" evidence="30">
    <location>
        <begin position="869"/>
        <end position="877"/>
    </location>
</feature>
<feature type="strand" evidence="30">
    <location>
        <begin position="882"/>
        <end position="890"/>
    </location>
</feature>
<feature type="helix" evidence="30">
    <location>
        <begin position="894"/>
        <end position="896"/>
    </location>
</feature>
<feature type="strand" evidence="30">
    <location>
        <begin position="898"/>
        <end position="900"/>
    </location>
</feature>
<feature type="strand" evidence="30">
    <location>
        <begin position="904"/>
        <end position="915"/>
    </location>
</feature>
<feature type="helix" evidence="30">
    <location>
        <begin position="919"/>
        <end position="929"/>
    </location>
</feature>
<feature type="helix" evidence="30">
    <location>
        <begin position="932"/>
        <end position="934"/>
    </location>
</feature>
<feature type="strand" evidence="30">
    <location>
        <begin position="937"/>
        <end position="941"/>
    </location>
</feature>
<feature type="strand" evidence="30">
    <location>
        <begin position="951"/>
        <end position="953"/>
    </location>
</feature>
<feature type="helix" evidence="30">
    <location>
        <begin position="955"/>
        <end position="957"/>
    </location>
</feature>
<feature type="strand" evidence="26">
    <location>
        <begin position="968"/>
        <end position="971"/>
    </location>
</feature>
<feature type="helix" evidence="27">
    <location>
        <begin position="976"/>
        <end position="988"/>
    </location>
</feature>
<feature type="strand" evidence="28">
    <location>
        <begin position="994"/>
        <end position="996"/>
    </location>
</feature>
<feature type="turn" evidence="27">
    <location>
        <begin position="999"/>
        <end position="1003"/>
    </location>
</feature>
<feature type="helix" evidence="27">
    <location>
        <begin position="1006"/>
        <end position="1020"/>
    </location>
</feature>
<feature type="helix" evidence="27">
    <location>
        <begin position="1026"/>
        <end position="1031"/>
    </location>
</feature>
<feature type="helix" evidence="27">
    <location>
        <begin position="1035"/>
        <end position="1043"/>
    </location>
</feature>
<feature type="turn" evidence="27">
    <location>
        <begin position="1050"/>
        <end position="1053"/>
    </location>
</feature>
<feature type="strand" evidence="27">
    <location>
        <begin position="1054"/>
        <end position="1061"/>
    </location>
</feature>
<feature type="strand" evidence="26">
    <location>
        <begin position="1063"/>
        <end position="1065"/>
    </location>
</feature>
<feature type="strand" evidence="27">
    <location>
        <begin position="1067"/>
        <end position="1071"/>
    </location>
</feature>
<feature type="helix" evidence="27">
    <location>
        <begin position="1079"/>
        <end position="1086"/>
    </location>
</feature>
<feature type="strand" evidence="27">
    <location>
        <begin position="1093"/>
        <end position="1097"/>
    </location>
</feature>
<feature type="turn" evidence="27">
    <location>
        <begin position="1101"/>
        <end position="1103"/>
    </location>
</feature>
<feature type="helix" evidence="27">
    <location>
        <begin position="1105"/>
        <end position="1108"/>
    </location>
</feature>
<feature type="helix" evidence="27">
    <location>
        <begin position="1112"/>
        <end position="1126"/>
    </location>
</feature>
<feature type="strand" evidence="27">
    <location>
        <begin position="1128"/>
        <end position="1130"/>
    </location>
</feature>
<feature type="strand" evidence="27">
    <location>
        <begin position="1132"/>
        <end position="1137"/>
    </location>
</feature>
<feature type="helix" evidence="27">
    <location>
        <begin position="1139"/>
        <end position="1153"/>
    </location>
</feature>
<feature type="strand" evidence="27">
    <location>
        <begin position="1158"/>
        <end position="1165"/>
    </location>
</feature>
<feature type="helix" evidence="27">
    <location>
        <begin position="1170"/>
        <end position="1173"/>
    </location>
</feature>
<feature type="helix" evidence="26">
    <location>
        <begin position="1174"/>
        <end position="1180"/>
    </location>
</feature>
<feature type="helix" evidence="27">
    <location>
        <begin position="1186"/>
        <end position="1199"/>
    </location>
</feature>
<feature type="turn" evidence="28">
    <location>
        <begin position="1200"/>
        <end position="1203"/>
    </location>
</feature>
<feature type="helix" evidence="27">
    <location>
        <begin position="1208"/>
        <end position="1224"/>
    </location>
</feature>
<feature type="strand" evidence="27">
    <location>
        <begin position="1232"/>
        <end position="1241"/>
    </location>
</feature>
<feature type="helix" evidence="27">
    <location>
        <begin position="1242"/>
        <end position="1244"/>
    </location>
</feature>
<feature type="turn" evidence="29">
    <location>
        <begin position="1248"/>
        <end position="1250"/>
    </location>
</feature>
<feature type="helix" evidence="27">
    <location>
        <begin position="1251"/>
        <end position="1255"/>
    </location>
</feature>
<feature type="turn" evidence="27">
    <location>
        <begin position="1256"/>
        <end position="1258"/>
    </location>
</feature>
<feature type="strand" evidence="27">
    <location>
        <begin position="1259"/>
        <end position="1269"/>
    </location>
</feature>
<feature type="helix" evidence="27">
    <location>
        <begin position="1271"/>
        <end position="1275"/>
    </location>
</feature>
<feature type="turn" evidence="27">
    <location>
        <begin position="1277"/>
        <end position="1279"/>
    </location>
</feature>
<feature type="helix" evidence="27">
    <location>
        <begin position="1280"/>
        <end position="1291"/>
    </location>
</feature>
<evidence type="ECO:0000255" key="1">
    <source>
        <dbReference type="PROSITE-ProRule" id="PRU00258"/>
    </source>
</evidence>
<evidence type="ECO:0000269" key="2">
    <source>
    </source>
</evidence>
<evidence type="ECO:0000269" key="3">
    <source>
    </source>
</evidence>
<evidence type="ECO:0000269" key="4">
    <source>
    </source>
</evidence>
<evidence type="ECO:0000269" key="5">
    <source>
    </source>
</evidence>
<evidence type="ECO:0000269" key="6">
    <source>
    </source>
</evidence>
<evidence type="ECO:0000269" key="7">
    <source>
    </source>
</evidence>
<evidence type="ECO:0000269" key="8">
    <source>
    </source>
</evidence>
<evidence type="ECO:0000269" key="9">
    <source>
    </source>
</evidence>
<evidence type="ECO:0000269" key="10">
    <source>
    </source>
</evidence>
<evidence type="ECO:0000269" key="11">
    <source>
    </source>
</evidence>
<evidence type="ECO:0000269" key="12">
    <source>
    </source>
</evidence>
<evidence type="ECO:0000269" key="13">
    <source>
    </source>
</evidence>
<evidence type="ECO:0000303" key="14">
    <source>
    </source>
</evidence>
<evidence type="ECO:0000305" key="15"/>
<evidence type="ECO:0000305" key="16">
    <source>
    </source>
</evidence>
<evidence type="ECO:0000305" key="17">
    <source>
    </source>
</evidence>
<evidence type="ECO:0000305" key="18">
    <source>
    </source>
</evidence>
<evidence type="ECO:0000305" key="19">
    <source>
    </source>
</evidence>
<evidence type="ECO:0000305" key="20">
    <source>
    </source>
</evidence>
<evidence type="ECO:0007744" key="21">
    <source>
        <dbReference type="PDB" id="2ROQ"/>
    </source>
</evidence>
<evidence type="ECO:0007744" key="22">
    <source>
        <dbReference type="PDB" id="3TEJ"/>
    </source>
</evidence>
<evidence type="ECO:0007744" key="23">
    <source>
        <dbReference type="PDB" id="5JA1"/>
    </source>
</evidence>
<evidence type="ECO:0007744" key="24">
    <source>
        <dbReference type="PDB" id="5JA2"/>
    </source>
</evidence>
<evidence type="ECO:0007744" key="25">
    <source>
        <dbReference type="PDB" id="5T3D"/>
    </source>
</evidence>
<evidence type="ECO:0007829" key="26">
    <source>
        <dbReference type="PDB" id="2ROQ"/>
    </source>
</evidence>
<evidence type="ECO:0007829" key="27">
    <source>
        <dbReference type="PDB" id="3TEJ"/>
    </source>
</evidence>
<evidence type="ECO:0007829" key="28">
    <source>
        <dbReference type="PDB" id="5JA1"/>
    </source>
</evidence>
<evidence type="ECO:0007829" key="29">
    <source>
        <dbReference type="PDB" id="5JA2"/>
    </source>
</evidence>
<evidence type="ECO:0007829" key="30">
    <source>
        <dbReference type="PDB" id="5T3D"/>
    </source>
</evidence>